<gene>
    <name type="ordered locus">Sbal_3040</name>
</gene>
<protein>
    <recommendedName>
        <fullName evidence="1">Probable Fe(2+)-trafficking protein</fullName>
    </recommendedName>
</protein>
<comment type="function">
    <text evidence="1">Could be a mediator in iron transactions between iron acquisition and iron-requiring processes, such as synthesis and/or repair of Fe-S clusters in biosynthetic enzymes.</text>
</comment>
<comment type="similarity">
    <text evidence="1">Belongs to the Fe(2+)-trafficking protein family.</text>
</comment>
<sequence length="92" mass="10840">MARTVNCVYLNKEADGLDFQLYPGDLGKRIFDNISKEAWGLWQKKQTMLINEKKLNMMNVDDRKFLEEQMTSFLFEGKEVEIEGFVPEKDQD</sequence>
<reference key="1">
    <citation type="submission" date="2007-02" db="EMBL/GenBank/DDBJ databases">
        <title>Complete sequence of chromosome of Shewanella baltica OS155.</title>
        <authorList>
            <consortium name="US DOE Joint Genome Institute"/>
            <person name="Copeland A."/>
            <person name="Lucas S."/>
            <person name="Lapidus A."/>
            <person name="Barry K."/>
            <person name="Detter J.C."/>
            <person name="Glavina del Rio T."/>
            <person name="Hammon N."/>
            <person name="Israni S."/>
            <person name="Dalin E."/>
            <person name="Tice H."/>
            <person name="Pitluck S."/>
            <person name="Sims D.R."/>
            <person name="Brettin T."/>
            <person name="Bruce D."/>
            <person name="Han C."/>
            <person name="Tapia R."/>
            <person name="Brainard J."/>
            <person name="Schmutz J."/>
            <person name="Larimer F."/>
            <person name="Land M."/>
            <person name="Hauser L."/>
            <person name="Kyrpides N."/>
            <person name="Mikhailova N."/>
            <person name="Brettar I."/>
            <person name="Klappenbach J."/>
            <person name="Konstantinidis K."/>
            <person name="Rodrigues J."/>
            <person name="Tiedje J."/>
            <person name="Richardson P."/>
        </authorList>
    </citation>
    <scope>NUCLEOTIDE SEQUENCE [LARGE SCALE GENOMIC DNA]</scope>
    <source>
        <strain>OS155 / ATCC BAA-1091</strain>
    </source>
</reference>
<organism>
    <name type="scientific">Shewanella baltica (strain OS155 / ATCC BAA-1091)</name>
    <dbReference type="NCBI Taxonomy" id="325240"/>
    <lineage>
        <taxon>Bacteria</taxon>
        <taxon>Pseudomonadati</taxon>
        <taxon>Pseudomonadota</taxon>
        <taxon>Gammaproteobacteria</taxon>
        <taxon>Alteromonadales</taxon>
        <taxon>Shewanellaceae</taxon>
        <taxon>Shewanella</taxon>
    </lineage>
</organism>
<dbReference type="EMBL" id="CP000563">
    <property type="protein sequence ID" value="ABN62522.1"/>
    <property type="molecule type" value="Genomic_DNA"/>
</dbReference>
<dbReference type="RefSeq" id="WP_006082532.1">
    <property type="nucleotide sequence ID" value="NC_009052.1"/>
</dbReference>
<dbReference type="SMR" id="A3D709"/>
<dbReference type="STRING" id="325240.Sbal_3040"/>
<dbReference type="KEGG" id="sbl:Sbal_3040"/>
<dbReference type="HOGENOM" id="CLU_170994_0_0_6"/>
<dbReference type="OrthoDB" id="9804318at2"/>
<dbReference type="Proteomes" id="UP000001557">
    <property type="component" value="Chromosome"/>
</dbReference>
<dbReference type="GO" id="GO:0005829">
    <property type="term" value="C:cytosol"/>
    <property type="evidence" value="ECO:0007669"/>
    <property type="project" value="TreeGrafter"/>
</dbReference>
<dbReference type="GO" id="GO:0005506">
    <property type="term" value="F:iron ion binding"/>
    <property type="evidence" value="ECO:0007669"/>
    <property type="project" value="UniProtKB-UniRule"/>
</dbReference>
<dbReference type="GO" id="GO:0034599">
    <property type="term" value="P:cellular response to oxidative stress"/>
    <property type="evidence" value="ECO:0007669"/>
    <property type="project" value="TreeGrafter"/>
</dbReference>
<dbReference type="FunFam" id="1.10.3880.10:FF:000001">
    <property type="entry name" value="Probable Fe(2+)-trafficking protein"/>
    <property type="match status" value="1"/>
</dbReference>
<dbReference type="Gene3D" id="1.10.3880.10">
    <property type="entry name" value="Fe(II) trafficking protein YggX"/>
    <property type="match status" value="1"/>
</dbReference>
<dbReference type="HAMAP" id="MF_00686">
    <property type="entry name" value="Fe_traffic_YggX"/>
    <property type="match status" value="1"/>
</dbReference>
<dbReference type="InterPro" id="IPR007457">
    <property type="entry name" value="Fe_traffick_prot_YggX"/>
</dbReference>
<dbReference type="InterPro" id="IPR036766">
    <property type="entry name" value="Fe_traffick_prot_YggX_sf"/>
</dbReference>
<dbReference type="NCBIfam" id="NF003817">
    <property type="entry name" value="PRK05408.1"/>
    <property type="match status" value="1"/>
</dbReference>
<dbReference type="PANTHER" id="PTHR36965">
    <property type="entry name" value="FE(2+)-TRAFFICKING PROTEIN-RELATED"/>
    <property type="match status" value="1"/>
</dbReference>
<dbReference type="PANTHER" id="PTHR36965:SF1">
    <property type="entry name" value="FE(2+)-TRAFFICKING PROTEIN-RELATED"/>
    <property type="match status" value="1"/>
</dbReference>
<dbReference type="Pfam" id="PF04362">
    <property type="entry name" value="Iron_traffic"/>
    <property type="match status" value="1"/>
</dbReference>
<dbReference type="PIRSF" id="PIRSF029827">
    <property type="entry name" value="Fe_traffic_YggX"/>
    <property type="match status" value="1"/>
</dbReference>
<dbReference type="SUPFAM" id="SSF111148">
    <property type="entry name" value="YggX-like"/>
    <property type="match status" value="1"/>
</dbReference>
<feature type="chain" id="PRO_1000045061" description="Probable Fe(2+)-trafficking protein">
    <location>
        <begin position="1"/>
        <end position="92"/>
    </location>
</feature>
<proteinExistence type="inferred from homology"/>
<accession>A3D709</accession>
<name>FETP_SHEB5</name>
<keyword id="KW-0408">Iron</keyword>
<keyword id="KW-1185">Reference proteome</keyword>
<evidence type="ECO:0000255" key="1">
    <source>
        <dbReference type="HAMAP-Rule" id="MF_00686"/>
    </source>
</evidence>